<keyword id="KW-0414">Isoprene biosynthesis</keyword>
<keyword id="KW-0456">Lyase</keyword>
<keyword id="KW-0479">Metal-binding</keyword>
<keyword id="KW-1185">Reference proteome</keyword>
<comment type="function">
    <text evidence="1">Involved in the biosynthesis of isopentenyl diphosphate (IPP) and dimethylallyl diphosphate (DMAPP), two major building blocks of isoprenoid compounds. Catalyzes the conversion of 4-diphosphocytidyl-2-C-methyl-D-erythritol 2-phosphate (CDP-ME2P) to 2-C-methyl-D-erythritol 2,4-cyclodiphosphate (ME-CPP) with a corresponding release of cytidine 5-monophosphate (CMP).</text>
</comment>
<comment type="catalytic activity">
    <reaction evidence="1">
        <text>4-CDP-2-C-methyl-D-erythritol 2-phosphate = 2-C-methyl-D-erythritol 2,4-cyclic diphosphate + CMP</text>
        <dbReference type="Rhea" id="RHEA:23864"/>
        <dbReference type="ChEBI" id="CHEBI:57919"/>
        <dbReference type="ChEBI" id="CHEBI:58483"/>
        <dbReference type="ChEBI" id="CHEBI:60377"/>
        <dbReference type="EC" id="4.6.1.12"/>
    </reaction>
</comment>
<comment type="cofactor">
    <cofactor evidence="1">
        <name>a divalent metal cation</name>
        <dbReference type="ChEBI" id="CHEBI:60240"/>
    </cofactor>
    <text evidence="1">Binds 1 divalent metal cation per subunit.</text>
</comment>
<comment type="pathway">
    <text evidence="1">Isoprenoid biosynthesis; isopentenyl diphosphate biosynthesis via DXP pathway; isopentenyl diphosphate from 1-deoxy-D-xylulose 5-phosphate: step 4/6.</text>
</comment>
<comment type="subunit">
    <text evidence="1">Homotrimer.</text>
</comment>
<comment type="similarity">
    <text evidence="1">Belongs to the IspF family.</text>
</comment>
<sequence>MRVGIGSDVHPIEPGRPCWMAGLLFEGEDGCSGHSDGDVAAHALCDALLSAAGLGDVGAVFGTGRPEWADVSGAAMLTEVRRLLGEAGFEVVNAAVQVIGNRPKIGPRRAEAQRVLGDLLDAPVSVSGTTTDGLGLTGRGEGIAAVATALLRPRV</sequence>
<accession>Q5Z2R2</accession>
<organism>
    <name type="scientific">Nocardia farcinica (strain IFM 10152)</name>
    <dbReference type="NCBI Taxonomy" id="247156"/>
    <lineage>
        <taxon>Bacteria</taxon>
        <taxon>Bacillati</taxon>
        <taxon>Actinomycetota</taxon>
        <taxon>Actinomycetes</taxon>
        <taxon>Mycobacteriales</taxon>
        <taxon>Nocardiaceae</taxon>
        <taxon>Nocardia</taxon>
    </lineage>
</organism>
<evidence type="ECO:0000255" key="1">
    <source>
        <dbReference type="HAMAP-Rule" id="MF_00107"/>
    </source>
</evidence>
<dbReference type="EC" id="4.6.1.12" evidence="1"/>
<dbReference type="EMBL" id="AP006618">
    <property type="protein sequence ID" value="BAD55279.1"/>
    <property type="molecule type" value="Genomic_DNA"/>
</dbReference>
<dbReference type="RefSeq" id="WP_011206966.1">
    <property type="nucleotide sequence ID" value="NC_006361.1"/>
</dbReference>
<dbReference type="SMR" id="Q5Z2R2"/>
<dbReference type="STRING" id="247156.NFA_4370"/>
<dbReference type="GeneID" id="61131273"/>
<dbReference type="KEGG" id="nfa:NFA_4370"/>
<dbReference type="eggNOG" id="COG0245">
    <property type="taxonomic scope" value="Bacteria"/>
</dbReference>
<dbReference type="HOGENOM" id="CLU_084630_1_0_11"/>
<dbReference type="OrthoDB" id="9804336at2"/>
<dbReference type="UniPathway" id="UPA00056">
    <property type="reaction ID" value="UER00095"/>
</dbReference>
<dbReference type="Proteomes" id="UP000006820">
    <property type="component" value="Chromosome"/>
</dbReference>
<dbReference type="GO" id="GO:0008685">
    <property type="term" value="F:2-C-methyl-D-erythritol 2,4-cyclodiphosphate synthase activity"/>
    <property type="evidence" value="ECO:0007669"/>
    <property type="project" value="UniProtKB-UniRule"/>
</dbReference>
<dbReference type="GO" id="GO:0046872">
    <property type="term" value="F:metal ion binding"/>
    <property type="evidence" value="ECO:0007669"/>
    <property type="project" value="UniProtKB-KW"/>
</dbReference>
<dbReference type="GO" id="GO:0019288">
    <property type="term" value="P:isopentenyl diphosphate biosynthetic process, methylerythritol 4-phosphate pathway"/>
    <property type="evidence" value="ECO:0007669"/>
    <property type="project" value="UniProtKB-UniRule"/>
</dbReference>
<dbReference type="GO" id="GO:0016114">
    <property type="term" value="P:terpenoid biosynthetic process"/>
    <property type="evidence" value="ECO:0007669"/>
    <property type="project" value="InterPro"/>
</dbReference>
<dbReference type="CDD" id="cd00554">
    <property type="entry name" value="MECDP_synthase"/>
    <property type="match status" value="1"/>
</dbReference>
<dbReference type="FunFam" id="3.30.1330.50:FF:000003">
    <property type="entry name" value="2-C-methyl-D-erythritol 2,4-cyclodiphosphate synthase"/>
    <property type="match status" value="1"/>
</dbReference>
<dbReference type="Gene3D" id="3.30.1330.50">
    <property type="entry name" value="2-C-methyl-D-erythritol 2,4-cyclodiphosphate synthase"/>
    <property type="match status" value="1"/>
</dbReference>
<dbReference type="HAMAP" id="MF_00107">
    <property type="entry name" value="IspF"/>
    <property type="match status" value="1"/>
</dbReference>
<dbReference type="InterPro" id="IPR003526">
    <property type="entry name" value="MECDP_synthase"/>
</dbReference>
<dbReference type="InterPro" id="IPR020555">
    <property type="entry name" value="MECDP_synthase_CS"/>
</dbReference>
<dbReference type="InterPro" id="IPR036571">
    <property type="entry name" value="MECDP_synthase_sf"/>
</dbReference>
<dbReference type="NCBIfam" id="TIGR00151">
    <property type="entry name" value="ispF"/>
    <property type="match status" value="1"/>
</dbReference>
<dbReference type="PANTHER" id="PTHR43181">
    <property type="entry name" value="2-C-METHYL-D-ERYTHRITOL 2,4-CYCLODIPHOSPHATE SYNTHASE, CHLOROPLASTIC"/>
    <property type="match status" value="1"/>
</dbReference>
<dbReference type="PANTHER" id="PTHR43181:SF1">
    <property type="entry name" value="2-C-METHYL-D-ERYTHRITOL 2,4-CYCLODIPHOSPHATE SYNTHASE, CHLOROPLASTIC"/>
    <property type="match status" value="1"/>
</dbReference>
<dbReference type="Pfam" id="PF02542">
    <property type="entry name" value="YgbB"/>
    <property type="match status" value="1"/>
</dbReference>
<dbReference type="SUPFAM" id="SSF69765">
    <property type="entry name" value="IpsF-like"/>
    <property type="match status" value="1"/>
</dbReference>
<dbReference type="PROSITE" id="PS01350">
    <property type="entry name" value="ISPF"/>
    <property type="match status" value="1"/>
</dbReference>
<gene>
    <name evidence="1" type="primary">ispF</name>
    <name type="ordered locus">NFA_4370</name>
</gene>
<reference key="1">
    <citation type="journal article" date="2004" name="Proc. Natl. Acad. Sci. U.S.A.">
        <title>The complete genomic sequence of Nocardia farcinica IFM 10152.</title>
        <authorList>
            <person name="Ishikawa J."/>
            <person name="Yamashita A."/>
            <person name="Mikami Y."/>
            <person name="Hoshino Y."/>
            <person name="Kurita H."/>
            <person name="Hotta K."/>
            <person name="Shiba T."/>
            <person name="Hattori M."/>
        </authorList>
    </citation>
    <scope>NUCLEOTIDE SEQUENCE [LARGE SCALE GENOMIC DNA]</scope>
    <source>
        <strain>IFM 10152</strain>
    </source>
</reference>
<proteinExistence type="inferred from homology"/>
<name>ISPF_NOCFA</name>
<feature type="chain" id="PRO_0000189489" description="2-C-methyl-D-erythritol 2,4-cyclodiphosphate synthase">
    <location>
        <begin position="1"/>
        <end position="155"/>
    </location>
</feature>
<feature type="binding site" evidence="1">
    <location>
        <begin position="8"/>
        <end position="10"/>
    </location>
    <ligand>
        <name>4-CDP-2-C-methyl-D-erythritol 2-phosphate</name>
        <dbReference type="ChEBI" id="CHEBI:57919"/>
    </ligand>
</feature>
<feature type="binding site" evidence="1">
    <location>
        <position position="8"/>
    </location>
    <ligand>
        <name>a divalent metal cation</name>
        <dbReference type="ChEBI" id="CHEBI:60240"/>
    </ligand>
</feature>
<feature type="binding site" evidence="1">
    <location>
        <position position="10"/>
    </location>
    <ligand>
        <name>a divalent metal cation</name>
        <dbReference type="ChEBI" id="CHEBI:60240"/>
    </ligand>
</feature>
<feature type="binding site" evidence="1">
    <location>
        <begin position="34"/>
        <end position="35"/>
    </location>
    <ligand>
        <name>4-CDP-2-C-methyl-D-erythritol 2-phosphate</name>
        <dbReference type="ChEBI" id="CHEBI:57919"/>
    </ligand>
</feature>
<feature type="binding site" evidence="1">
    <location>
        <position position="42"/>
    </location>
    <ligand>
        <name>a divalent metal cation</name>
        <dbReference type="ChEBI" id="CHEBI:60240"/>
    </ligand>
</feature>
<feature type="binding site" evidence="1">
    <location>
        <begin position="56"/>
        <end position="58"/>
    </location>
    <ligand>
        <name>4-CDP-2-C-methyl-D-erythritol 2-phosphate</name>
        <dbReference type="ChEBI" id="CHEBI:57919"/>
    </ligand>
</feature>
<feature type="binding site" evidence="1">
    <location>
        <begin position="129"/>
        <end position="132"/>
    </location>
    <ligand>
        <name>4-CDP-2-C-methyl-D-erythritol 2-phosphate</name>
        <dbReference type="ChEBI" id="CHEBI:57919"/>
    </ligand>
</feature>
<feature type="binding site" evidence="1">
    <location>
        <position position="139"/>
    </location>
    <ligand>
        <name>4-CDP-2-C-methyl-D-erythritol 2-phosphate</name>
        <dbReference type="ChEBI" id="CHEBI:57919"/>
    </ligand>
</feature>
<feature type="site" description="Transition state stabilizer" evidence="1">
    <location>
        <position position="34"/>
    </location>
</feature>
<feature type="site" description="Transition state stabilizer" evidence="1">
    <location>
        <position position="130"/>
    </location>
</feature>
<protein>
    <recommendedName>
        <fullName evidence="1">2-C-methyl-D-erythritol 2,4-cyclodiphosphate synthase</fullName>
        <shortName evidence="1">MECDP-synthase</shortName>
        <shortName evidence="1">MECPP-synthase</shortName>
        <shortName evidence="1">MECPS</shortName>
        <ecNumber evidence="1">4.6.1.12</ecNumber>
    </recommendedName>
</protein>